<keyword id="KW-0963">Cytoplasm</keyword>
<keyword id="KW-0694">RNA-binding</keyword>
<dbReference type="EMBL" id="CU207366">
    <property type="protein sequence ID" value="CAL67235.1"/>
    <property type="molecule type" value="Genomic_DNA"/>
</dbReference>
<dbReference type="SMR" id="A0M3P0"/>
<dbReference type="STRING" id="411154.GFO_2270"/>
<dbReference type="KEGG" id="gfo:GFO_2270"/>
<dbReference type="eggNOG" id="COG0691">
    <property type="taxonomic scope" value="Bacteria"/>
</dbReference>
<dbReference type="HOGENOM" id="CLU_108953_0_1_10"/>
<dbReference type="Proteomes" id="UP000000755">
    <property type="component" value="Chromosome"/>
</dbReference>
<dbReference type="GO" id="GO:0005829">
    <property type="term" value="C:cytosol"/>
    <property type="evidence" value="ECO:0007669"/>
    <property type="project" value="TreeGrafter"/>
</dbReference>
<dbReference type="GO" id="GO:0003723">
    <property type="term" value="F:RNA binding"/>
    <property type="evidence" value="ECO:0007669"/>
    <property type="project" value="UniProtKB-UniRule"/>
</dbReference>
<dbReference type="GO" id="GO:0070929">
    <property type="term" value="P:trans-translation"/>
    <property type="evidence" value="ECO:0007669"/>
    <property type="project" value="UniProtKB-UniRule"/>
</dbReference>
<dbReference type="CDD" id="cd09294">
    <property type="entry name" value="SmpB"/>
    <property type="match status" value="1"/>
</dbReference>
<dbReference type="Gene3D" id="2.40.280.10">
    <property type="match status" value="1"/>
</dbReference>
<dbReference type="HAMAP" id="MF_00023">
    <property type="entry name" value="SmpB"/>
    <property type="match status" value="1"/>
</dbReference>
<dbReference type="InterPro" id="IPR023620">
    <property type="entry name" value="SmpB"/>
</dbReference>
<dbReference type="InterPro" id="IPR000037">
    <property type="entry name" value="SsrA-bd_prot"/>
</dbReference>
<dbReference type="InterPro" id="IPR020081">
    <property type="entry name" value="SsrA-bd_prot_CS"/>
</dbReference>
<dbReference type="NCBIfam" id="NF003843">
    <property type="entry name" value="PRK05422.1"/>
    <property type="match status" value="1"/>
</dbReference>
<dbReference type="NCBIfam" id="TIGR00086">
    <property type="entry name" value="smpB"/>
    <property type="match status" value="1"/>
</dbReference>
<dbReference type="PANTHER" id="PTHR30308:SF2">
    <property type="entry name" value="SSRA-BINDING PROTEIN"/>
    <property type="match status" value="1"/>
</dbReference>
<dbReference type="PANTHER" id="PTHR30308">
    <property type="entry name" value="TMRNA-BINDING COMPONENT OF TRANS-TRANSLATION TAGGING COMPLEX"/>
    <property type="match status" value="1"/>
</dbReference>
<dbReference type="Pfam" id="PF01668">
    <property type="entry name" value="SmpB"/>
    <property type="match status" value="1"/>
</dbReference>
<dbReference type="SUPFAM" id="SSF74982">
    <property type="entry name" value="Small protein B (SmpB)"/>
    <property type="match status" value="1"/>
</dbReference>
<dbReference type="PROSITE" id="PS01317">
    <property type="entry name" value="SSRP"/>
    <property type="match status" value="1"/>
</dbReference>
<proteinExistence type="inferred from homology"/>
<accession>A0M3P0</accession>
<comment type="function">
    <text evidence="1">Required for rescue of stalled ribosomes mediated by trans-translation. Binds to transfer-messenger RNA (tmRNA), required for stable association of tmRNA with ribosomes. tmRNA and SmpB together mimic tRNA shape, replacing the anticodon stem-loop with SmpB. tmRNA is encoded by the ssrA gene; the 2 termini fold to resemble tRNA(Ala) and it encodes a 'tag peptide', a short internal open reading frame. During trans-translation Ala-aminoacylated tmRNA acts like a tRNA, entering the A-site of stalled ribosomes, displacing the stalled mRNA. The ribosome then switches to translate the ORF on the tmRNA; the nascent peptide is terminated with the 'tag peptide' encoded by the tmRNA and targeted for degradation. The ribosome is freed to recommence translation, which seems to be the essential function of trans-translation.</text>
</comment>
<comment type="subcellular location">
    <subcellularLocation>
        <location evidence="1">Cytoplasm</location>
    </subcellularLocation>
    <text evidence="1">The tmRNA-SmpB complex associates with stalled 70S ribosomes.</text>
</comment>
<comment type="similarity">
    <text evidence="1">Belongs to the SmpB family.</text>
</comment>
<gene>
    <name evidence="1" type="primary">smpB</name>
    <name type="ordered locus">GFO_2270</name>
</gene>
<protein>
    <recommendedName>
        <fullName evidence="1">SsrA-binding protein</fullName>
    </recommendedName>
    <alternativeName>
        <fullName evidence="1">Small protein B</fullName>
    </alternativeName>
</protein>
<evidence type="ECO:0000255" key="1">
    <source>
        <dbReference type="HAMAP-Rule" id="MF_00023"/>
    </source>
</evidence>
<feature type="chain" id="PRO_0000331050" description="SsrA-binding protein">
    <location>
        <begin position="1"/>
        <end position="157"/>
    </location>
</feature>
<name>SSRP_CHRFK</name>
<organism>
    <name type="scientific">Christiangramia forsetii (strain DSM 17595 / CGMCC 1.15422 / KT0803)</name>
    <name type="common">Gramella forsetii</name>
    <dbReference type="NCBI Taxonomy" id="411154"/>
    <lineage>
        <taxon>Bacteria</taxon>
        <taxon>Pseudomonadati</taxon>
        <taxon>Bacteroidota</taxon>
        <taxon>Flavobacteriia</taxon>
        <taxon>Flavobacteriales</taxon>
        <taxon>Flavobacteriaceae</taxon>
        <taxon>Christiangramia</taxon>
    </lineage>
</organism>
<reference key="1">
    <citation type="journal article" date="2006" name="Environ. Microbiol.">
        <title>Whole genome analysis of the marine Bacteroidetes'Gramella forsetii' reveals adaptations to degradation of polymeric organic matter.</title>
        <authorList>
            <person name="Bauer M."/>
            <person name="Kube M."/>
            <person name="Teeling H."/>
            <person name="Richter M."/>
            <person name="Lombardot T."/>
            <person name="Allers E."/>
            <person name="Wuerdemann C.A."/>
            <person name="Quast C."/>
            <person name="Kuhl H."/>
            <person name="Knaust F."/>
            <person name="Woebken D."/>
            <person name="Bischof K."/>
            <person name="Mussmann M."/>
            <person name="Choudhuri J.V."/>
            <person name="Meyer F."/>
            <person name="Reinhardt R."/>
            <person name="Amann R.I."/>
            <person name="Gloeckner F.O."/>
        </authorList>
    </citation>
    <scope>NUCLEOTIDE SEQUENCE [LARGE SCALE GENOMIC DNA]</scope>
    <source>
        <strain>DSM 17595 / CGMCC 1.15422 / KT0803</strain>
    </source>
</reference>
<sequence length="157" mass="18667">MYFCGYMKNSINIKNRKAKFNYEFLDKYTAGIKLAGTEIKAIREGKANIAESFCEFNNHELFVINMHVEEYSHATHFNHNPRSQRKLLLQRRELRKLEKEVTNSGLTIIPLRLFINDRGLAKLQISLAKGKKLYDKRETIKDRESKRRLDRIQKEYK</sequence>